<comment type="function">
    <text evidence="1">Catalyzes the 2-thiolation of uridine at the wobble position (U34) of tRNA, leading to the formation of s(2)U34.</text>
</comment>
<comment type="catalytic activity">
    <reaction evidence="1">
        <text>S-sulfanyl-L-cysteinyl-[protein] + uridine(34) in tRNA + AH2 + ATP = 2-thiouridine(34) in tRNA + L-cysteinyl-[protein] + A + AMP + diphosphate + H(+)</text>
        <dbReference type="Rhea" id="RHEA:47032"/>
        <dbReference type="Rhea" id="RHEA-COMP:10131"/>
        <dbReference type="Rhea" id="RHEA-COMP:11726"/>
        <dbReference type="Rhea" id="RHEA-COMP:11727"/>
        <dbReference type="Rhea" id="RHEA-COMP:11728"/>
        <dbReference type="ChEBI" id="CHEBI:13193"/>
        <dbReference type="ChEBI" id="CHEBI:15378"/>
        <dbReference type="ChEBI" id="CHEBI:17499"/>
        <dbReference type="ChEBI" id="CHEBI:29950"/>
        <dbReference type="ChEBI" id="CHEBI:30616"/>
        <dbReference type="ChEBI" id="CHEBI:33019"/>
        <dbReference type="ChEBI" id="CHEBI:61963"/>
        <dbReference type="ChEBI" id="CHEBI:65315"/>
        <dbReference type="ChEBI" id="CHEBI:87170"/>
        <dbReference type="ChEBI" id="CHEBI:456215"/>
        <dbReference type="EC" id="2.8.1.13"/>
    </reaction>
</comment>
<comment type="subcellular location">
    <subcellularLocation>
        <location evidence="1">Cytoplasm</location>
    </subcellularLocation>
</comment>
<comment type="similarity">
    <text evidence="1">Belongs to the MnmA/TRMU family.</text>
</comment>
<comment type="sequence caution" evidence="2">
    <conflict type="erroneous initiation">
        <sequence resource="EMBL-CDS" id="ABJ72444"/>
    </conflict>
</comment>
<accession>Q030C8</accession>
<keyword id="KW-0067">ATP-binding</keyword>
<keyword id="KW-0963">Cytoplasm</keyword>
<keyword id="KW-1015">Disulfide bond</keyword>
<keyword id="KW-0547">Nucleotide-binding</keyword>
<keyword id="KW-0694">RNA-binding</keyword>
<keyword id="KW-0808">Transferase</keyword>
<keyword id="KW-0819">tRNA processing</keyword>
<keyword id="KW-0820">tRNA-binding</keyword>
<sequence>MSGKSPAQTRVVVGMSGGVDSSVTALLLKEQGYDVIGVFMKNWDDTDENGVCTATEDYKDVAAVADQIGVPYYSVNFEKEYWDRVFEYFLAEYRAGRTPNPDVMCNKEIKFKAFLDYAMELGADYVATGHYAQVRTDEDGTVHMLRGADNNKDQTYFLSQLTQEQLKKTMFPLGHLEKPEVRRIAEKAGLATAKKKDSTGICFIGEKNFKKFLGEYLPAQPGKMMTLDGVEMGNHAGLMYYTIGQRGGLGIGGQHGQLTSDPWFVVGKDLTTNTLYVGQGFHHEHLYSTSLDASDLSFTREMPETFDLHCTAKFRYRQEDTGVTIHVKADKVTVDFDEPVRAITPGQAVVFYDGEECLGGAMIDVAYKEQKVMQYQ</sequence>
<proteinExistence type="inferred from homology"/>
<feature type="chain" id="PRO_0000349676" description="tRNA-specific 2-thiouridylase MnmA">
    <location>
        <begin position="1"/>
        <end position="376"/>
    </location>
</feature>
<feature type="region of interest" description="Interaction with target base in tRNA" evidence="1">
    <location>
        <begin position="100"/>
        <end position="102"/>
    </location>
</feature>
<feature type="region of interest" description="Interaction with tRNA" evidence="1">
    <location>
        <begin position="152"/>
        <end position="154"/>
    </location>
</feature>
<feature type="region of interest" description="Interaction with tRNA" evidence="1">
    <location>
        <begin position="315"/>
        <end position="316"/>
    </location>
</feature>
<feature type="active site" description="Nucleophile" evidence="1">
    <location>
        <position position="105"/>
    </location>
</feature>
<feature type="active site" description="Cysteine persulfide intermediate" evidence="1">
    <location>
        <position position="202"/>
    </location>
</feature>
<feature type="binding site" evidence="1">
    <location>
        <begin position="14"/>
        <end position="21"/>
    </location>
    <ligand>
        <name>ATP</name>
        <dbReference type="ChEBI" id="CHEBI:30616"/>
    </ligand>
</feature>
<feature type="binding site" evidence="1">
    <location>
        <position position="40"/>
    </location>
    <ligand>
        <name>ATP</name>
        <dbReference type="ChEBI" id="CHEBI:30616"/>
    </ligand>
</feature>
<feature type="binding site" evidence="1">
    <location>
        <position position="129"/>
    </location>
    <ligand>
        <name>ATP</name>
        <dbReference type="ChEBI" id="CHEBI:30616"/>
    </ligand>
</feature>
<feature type="site" description="Interaction with tRNA" evidence="1">
    <location>
        <position position="130"/>
    </location>
</feature>
<feature type="site" description="Interaction with tRNA" evidence="1">
    <location>
        <position position="347"/>
    </location>
</feature>
<feature type="disulfide bond" description="Alternate" evidence="1">
    <location>
        <begin position="105"/>
        <end position="202"/>
    </location>
</feature>
<name>MNMA_LACLS</name>
<reference key="1">
    <citation type="journal article" date="2006" name="Proc. Natl. Acad. Sci. U.S.A.">
        <title>Comparative genomics of the lactic acid bacteria.</title>
        <authorList>
            <person name="Makarova K.S."/>
            <person name="Slesarev A."/>
            <person name="Wolf Y.I."/>
            <person name="Sorokin A."/>
            <person name="Mirkin B."/>
            <person name="Koonin E.V."/>
            <person name="Pavlov A."/>
            <person name="Pavlova N."/>
            <person name="Karamychev V."/>
            <person name="Polouchine N."/>
            <person name="Shakhova V."/>
            <person name="Grigoriev I."/>
            <person name="Lou Y."/>
            <person name="Rohksar D."/>
            <person name="Lucas S."/>
            <person name="Huang K."/>
            <person name="Goodstein D.M."/>
            <person name="Hawkins T."/>
            <person name="Plengvidhya V."/>
            <person name="Welker D."/>
            <person name="Hughes J."/>
            <person name="Goh Y."/>
            <person name="Benson A."/>
            <person name="Baldwin K."/>
            <person name="Lee J.-H."/>
            <person name="Diaz-Muniz I."/>
            <person name="Dosti B."/>
            <person name="Smeianov V."/>
            <person name="Wechter W."/>
            <person name="Barabote R."/>
            <person name="Lorca G."/>
            <person name="Altermann E."/>
            <person name="Barrangou R."/>
            <person name="Ganesan B."/>
            <person name="Xie Y."/>
            <person name="Rawsthorne H."/>
            <person name="Tamir D."/>
            <person name="Parker C."/>
            <person name="Breidt F."/>
            <person name="Broadbent J.R."/>
            <person name="Hutkins R."/>
            <person name="O'Sullivan D."/>
            <person name="Steele J."/>
            <person name="Unlu G."/>
            <person name="Saier M.H. Jr."/>
            <person name="Klaenhammer T."/>
            <person name="Richardson P."/>
            <person name="Kozyavkin S."/>
            <person name="Weimer B.C."/>
            <person name="Mills D.A."/>
        </authorList>
    </citation>
    <scope>NUCLEOTIDE SEQUENCE [LARGE SCALE GENOMIC DNA]</scope>
    <source>
        <strain>SK11</strain>
    </source>
</reference>
<protein>
    <recommendedName>
        <fullName evidence="1">tRNA-specific 2-thiouridylase MnmA</fullName>
        <ecNumber evidence="1">2.8.1.13</ecNumber>
    </recommendedName>
</protein>
<gene>
    <name evidence="1" type="primary">mnmA</name>
    <name type="ordered locus">LACR_0895</name>
</gene>
<dbReference type="EC" id="2.8.1.13" evidence="1"/>
<dbReference type="EMBL" id="CP000425">
    <property type="protein sequence ID" value="ABJ72444.1"/>
    <property type="status" value="ALT_INIT"/>
    <property type="molecule type" value="Genomic_DNA"/>
</dbReference>
<dbReference type="RefSeq" id="WP_031286465.1">
    <property type="nucleotide sequence ID" value="NC_008527.1"/>
</dbReference>
<dbReference type="SMR" id="Q030C8"/>
<dbReference type="GeneID" id="61109096"/>
<dbReference type="KEGG" id="llc:LACR_0895"/>
<dbReference type="HOGENOM" id="CLU_035188_1_0_9"/>
<dbReference type="Proteomes" id="UP000000240">
    <property type="component" value="Chromosome"/>
</dbReference>
<dbReference type="GO" id="GO:0005737">
    <property type="term" value="C:cytoplasm"/>
    <property type="evidence" value="ECO:0007669"/>
    <property type="project" value="UniProtKB-SubCell"/>
</dbReference>
<dbReference type="GO" id="GO:0005524">
    <property type="term" value="F:ATP binding"/>
    <property type="evidence" value="ECO:0007669"/>
    <property type="project" value="UniProtKB-KW"/>
</dbReference>
<dbReference type="GO" id="GO:0000049">
    <property type="term" value="F:tRNA binding"/>
    <property type="evidence" value="ECO:0007669"/>
    <property type="project" value="UniProtKB-KW"/>
</dbReference>
<dbReference type="GO" id="GO:0103016">
    <property type="term" value="F:tRNA-uridine 2-sulfurtransferase activity"/>
    <property type="evidence" value="ECO:0007669"/>
    <property type="project" value="UniProtKB-EC"/>
</dbReference>
<dbReference type="GO" id="GO:0002143">
    <property type="term" value="P:tRNA wobble position uridine thiolation"/>
    <property type="evidence" value="ECO:0007669"/>
    <property type="project" value="TreeGrafter"/>
</dbReference>
<dbReference type="CDD" id="cd01998">
    <property type="entry name" value="MnmA_TRMU-like"/>
    <property type="match status" value="1"/>
</dbReference>
<dbReference type="FunFam" id="2.30.30.280:FF:000001">
    <property type="entry name" value="tRNA-specific 2-thiouridylase MnmA"/>
    <property type="match status" value="1"/>
</dbReference>
<dbReference type="FunFam" id="2.40.30.10:FF:000023">
    <property type="entry name" value="tRNA-specific 2-thiouridylase MnmA"/>
    <property type="match status" value="1"/>
</dbReference>
<dbReference type="FunFam" id="3.40.50.620:FF:000004">
    <property type="entry name" value="tRNA-specific 2-thiouridylase MnmA"/>
    <property type="match status" value="1"/>
</dbReference>
<dbReference type="Gene3D" id="2.30.30.280">
    <property type="entry name" value="Adenine nucleotide alpha hydrolases-like domains"/>
    <property type="match status" value="1"/>
</dbReference>
<dbReference type="Gene3D" id="3.40.50.620">
    <property type="entry name" value="HUPs"/>
    <property type="match status" value="1"/>
</dbReference>
<dbReference type="Gene3D" id="2.40.30.10">
    <property type="entry name" value="Translation factors"/>
    <property type="match status" value="1"/>
</dbReference>
<dbReference type="HAMAP" id="MF_00144">
    <property type="entry name" value="tRNA_thiouridyl_MnmA"/>
    <property type="match status" value="1"/>
</dbReference>
<dbReference type="InterPro" id="IPR004506">
    <property type="entry name" value="MnmA-like"/>
</dbReference>
<dbReference type="InterPro" id="IPR046885">
    <property type="entry name" value="MnmA-like_C"/>
</dbReference>
<dbReference type="InterPro" id="IPR046884">
    <property type="entry name" value="MnmA-like_central"/>
</dbReference>
<dbReference type="InterPro" id="IPR023382">
    <property type="entry name" value="MnmA-like_central_sf"/>
</dbReference>
<dbReference type="InterPro" id="IPR014729">
    <property type="entry name" value="Rossmann-like_a/b/a_fold"/>
</dbReference>
<dbReference type="NCBIfam" id="NF001138">
    <property type="entry name" value="PRK00143.1"/>
    <property type="match status" value="1"/>
</dbReference>
<dbReference type="NCBIfam" id="TIGR00420">
    <property type="entry name" value="trmU"/>
    <property type="match status" value="1"/>
</dbReference>
<dbReference type="PANTHER" id="PTHR11933:SF5">
    <property type="entry name" value="MITOCHONDRIAL TRNA-SPECIFIC 2-THIOURIDYLASE 1"/>
    <property type="match status" value="1"/>
</dbReference>
<dbReference type="PANTHER" id="PTHR11933">
    <property type="entry name" value="TRNA 5-METHYLAMINOMETHYL-2-THIOURIDYLATE -METHYLTRANSFERASE"/>
    <property type="match status" value="1"/>
</dbReference>
<dbReference type="Pfam" id="PF03054">
    <property type="entry name" value="tRNA_Me_trans"/>
    <property type="match status" value="1"/>
</dbReference>
<dbReference type="Pfam" id="PF20258">
    <property type="entry name" value="tRNA_Me_trans_C"/>
    <property type="match status" value="1"/>
</dbReference>
<dbReference type="Pfam" id="PF20259">
    <property type="entry name" value="tRNA_Me_trans_M"/>
    <property type="match status" value="1"/>
</dbReference>
<dbReference type="SUPFAM" id="SSF52402">
    <property type="entry name" value="Adenine nucleotide alpha hydrolases-like"/>
    <property type="match status" value="1"/>
</dbReference>
<organism>
    <name type="scientific">Lactococcus lactis subsp. cremoris (strain SK11)</name>
    <dbReference type="NCBI Taxonomy" id="272622"/>
    <lineage>
        <taxon>Bacteria</taxon>
        <taxon>Bacillati</taxon>
        <taxon>Bacillota</taxon>
        <taxon>Bacilli</taxon>
        <taxon>Lactobacillales</taxon>
        <taxon>Streptococcaceae</taxon>
        <taxon>Lactococcus</taxon>
        <taxon>Lactococcus cremoris subsp. cremoris</taxon>
    </lineage>
</organism>
<evidence type="ECO:0000255" key="1">
    <source>
        <dbReference type="HAMAP-Rule" id="MF_00144"/>
    </source>
</evidence>
<evidence type="ECO:0000305" key="2"/>